<name>3BHS2_MESAU</name>
<dbReference type="EC" id="1.1.1.145" evidence="2"/>
<dbReference type="EC" id="5.3.3.1" evidence="2"/>
<dbReference type="EMBL" id="L38710">
    <property type="protein sequence ID" value="AAA96606.1"/>
    <property type="molecule type" value="mRNA"/>
</dbReference>
<dbReference type="SMR" id="Q64421"/>
<dbReference type="UniPathway" id="UPA00062"/>
<dbReference type="Proteomes" id="UP000189706">
    <property type="component" value="Unplaced"/>
</dbReference>
<dbReference type="GO" id="GO:0005783">
    <property type="term" value="C:endoplasmic reticulum"/>
    <property type="evidence" value="ECO:0000250"/>
    <property type="project" value="UniProtKB"/>
</dbReference>
<dbReference type="GO" id="GO:0005789">
    <property type="term" value="C:endoplasmic reticulum membrane"/>
    <property type="evidence" value="ECO:0007669"/>
    <property type="project" value="UniProtKB-SubCell"/>
</dbReference>
<dbReference type="GO" id="GO:0031966">
    <property type="term" value="C:mitochondrial membrane"/>
    <property type="evidence" value="ECO:0007669"/>
    <property type="project" value="UniProtKB-SubCell"/>
</dbReference>
<dbReference type="GO" id="GO:0003854">
    <property type="term" value="F:3-beta-hydroxy-Delta5-steroid dehydrogenase (NAD+) activity"/>
    <property type="evidence" value="ECO:0000250"/>
    <property type="project" value="UniProtKB"/>
</dbReference>
<dbReference type="GO" id="GO:0004769">
    <property type="term" value="F:steroid Delta-isomerase activity"/>
    <property type="evidence" value="ECO:0000250"/>
    <property type="project" value="UniProtKB"/>
</dbReference>
<dbReference type="GO" id="GO:0006702">
    <property type="term" value="P:androgen biosynthetic process"/>
    <property type="evidence" value="ECO:0000250"/>
    <property type="project" value="UniProtKB"/>
</dbReference>
<dbReference type="GO" id="GO:0006694">
    <property type="term" value="P:steroid biosynthetic process"/>
    <property type="evidence" value="ECO:0000250"/>
    <property type="project" value="UniProtKB"/>
</dbReference>
<dbReference type="FunFam" id="3.40.50.720:FF:000220">
    <property type="entry name" value="3 beta-hydroxysteroid dehydrogenase/Delta 5--&gt;4-isomerase type 1"/>
    <property type="match status" value="1"/>
</dbReference>
<dbReference type="Gene3D" id="3.40.50.720">
    <property type="entry name" value="NAD(P)-binding Rossmann-like Domain"/>
    <property type="match status" value="1"/>
</dbReference>
<dbReference type="InterPro" id="IPR002225">
    <property type="entry name" value="3Beta_OHSteriod_DH/Estase"/>
</dbReference>
<dbReference type="InterPro" id="IPR050177">
    <property type="entry name" value="Lipid_A_modif_metabolic_enz"/>
</dbReference>
<dbReference type="InterPro" id="IPR036291">
    <property type="entry name" value="NAD(P)-bd_dom_sf"/>
</dbReference>
<dbReference type="PANTHER" id="PTHR43245">
    <property type="entry name" value="BIFUNCTIONAL POLYMYXIN RESISTANCE PROTEIN ARNA"/>
    <property type="match status" value="1"/>
</dbReference>
<dbReference type="PANTHER" id="PTHR43245:SF51">
    <property type="entry name" value="SHORT CHAIN DEHYDROGENASE_REDUCTASE FAMILY 42E, MEMBER 2"/>
    <property type="match status" value="1"/>
</dbReference>
<dbReference type="Pfam" id="PF01073">
    <property type="entry name" value="3Beta_HSD"/>
    <property type="match status" value="1"/>
</dbReference>
<dbReference type="SUPFAM" id="SSF51735">
    <property type="entry name" value="NAD(P)-binding Rossmann-fold domains"/>
    <property type="match status" value="1"/>
</dbReference>
<comment type="function">
    <text evidence="2">3-beta-HSD is a bifunctional enzyme, that catalyzes the oxidative conversion of Delta(5)-ene-3-beta-hydroxy steroid, and the oxidative conversion of ketosteroids. The 3-beta-HSD enzymatic system plays a crucial role in the biosynthesis of all classes of hormonal steroids.</text>
</comment>
<comment type="catalytic activity">
    <reaction evidence="2">
        <text>a 3beta-hydroxy-Delta(5)-steroid + NAD(+) = a 3-oxo-Delta(5)-steroid + NADH + H(+)</text>
        <dbReference type="Rhea" id="RHEA:24076"/>
        <dbReference type="ChEBI" id="CHEBI:1722"/>
        <dbReference type="ChEBI" id="CHEBI:15378"/>
        <dbReference type="ChEBI" id="CHEBI:47907"/>
        <dbReference type="ChEBI" id="CHEBI:57540"/>
        <dbReference type="ChEBI" id="CHEBI:57945"/>
        <dbReference type="EC" id="1.1.1.145"/>
    </reaction>
</comment>
<comment type="catalytic activity">
    <reaction evidence="2">
        <text>a 3-oxo-Delta(5)-steroid = a 3-oxo-Delta(4)-steroid</text>
        <dbReference type="Rhea" id="RHEA:14709"/>
        <dbReference type="ChEBI" id="CHEBI:47907"/>
        <dbReference type="ChEBI" id="CHEBI:47909"/>
        <dbReference type="EC" id="5.3.3.1"/>
    </reaction>
</comment>
<comment type="catalytic activity">
    <reaction evidence="2">
        <text>pregnenolone + NAD(+) = pregn-5-ene-3,20-dione + NADH + H(+)</text>
        <dbReference type="Rhea" id="RHEA:43924"/>
        <dbReference type="ChEBI" id="CHEBI:15378"/>
        <dbReference type="ChEBI" id="CHEBI:16581"/>
        <dbReference type="ChEBI" id="CHEBI:57540"/>
        <dbReference type="ChEBI" id="CHEBI:57945"/>
        <dbReference type="ChEBI" id="CHEBI:63837"/>
    </reaction>
    <physiologicalReaction direction="left-to-right" evidence="2">
        <dbReference type="Rhea" id="RHEA:43925"/>
    </physiologicalReaction>
</comment>
<comment type="catalytic activity">
    <reaction evidence="2">
        <text>pregn-5-ene-3,20-dione = progesterone</text>
        <dbReference type="Rhea" id="RHEA:43928"/>
        <dbReference type="ChEBI" id="CHEBI:17026"/>
        <dbReference type="ChEBI" id="CHEBI:63837"/>
    </reaction>
    <physiologicalReaction direction="left-to-right" evidence="2">
        <dbReference type="Rhea" id="RHEA:43929"/>
    </physiologicalReaction>
</comment>
<comment type="catalytic activity">
    <reaction evidence="2">
        <text>3beta-hydroxyandrost-5-en-17-one + NAD(+) = androst-5-ene-3,17-dione + NADH + H(+)</text>
        <dbReference type="Rhea" id="RHEA:43932"/>
        <dbReference type="ChEBI" id="CHEBI:15378"/>
        <dbReference type="ChEBI" id="CHEBI:28689"/>
        <dbReference type="ChEBI" id="CHEBI:57540"/>
        <dbReference type="ChEBI" id="CHEBI:57945"/>
        <dbReference type="ChEBI" id="CHEBI:83865"/>
        <dbReference type="EC" id="1.1.1.145"/>
    </reaction>
    <physiologicalReaction direction="left-to-right" evidence="2">
        <dbReference type="Rhea" id="RHEA:43933"/>
    </physiologicalReaction>
</comment>
<comment type="catalytic activity">
    <reaction evidence="2">
        <text>androst-5-ene-3,17-dione = androst-4-ene-3,17-dione</text>
        <dbReference type="Rhea" id="RHEA:43936"/>
        <dbReference type="ChEBI" id="CHEBI:16422"/>
        <dbReference type="ChEBI" id="CHEBI:83865"/>
    </reaction>
    <physiologicalReaction direction="left-to-right" evidence="2">
        <dbReference type="Rhea" id="RHEA:43937"/>
    </physiologicalReaction>
</comment>
<comment type="pathway">
    <text evidence="2">Lipid metabolism; steroid biosynthesis.</text>
</comment>
<comment type="subcellular location">
    <subcellularLocation>
        <location evidence="2">Endoplasmic reticulum membrane</location>
        <topology evidence="3">Single-pass membrane protein</topology>
    </subcellularLocation>
    <subcellularLocation>
        <location evidence="2">Mitochondrion membrane</location>
        <topology evidence="3">Single-pass membrane protein</topology>
    </subcellularLocation>
</comment>
<comment type="tissue specificity">
    <text>High levels in adrenal gland, kidney and male liver. Low levels in female liver.</text>
</comment>
<comment type="similarity">
    <text evidence="4">Belongs to the 3-beta-HSD family.</text>
</comment>
<gene>
    <name type="primary">HSD3B2</name>
</gene>
<protein>
    <recommendedName>
        <fullName>3 beta-hydroxysteroid dehydrogenase/Delta 5--&gt;4-isomerase type 2</fullName>
    </recommendedName>
    <alternativeName>
        <fullName>3 beta-hydroxysteroid dehydrogenase/Delta 5--&gt;4-isomerase type II</fullName>
        <shortName>3-beta-HSD II</shortName>
    </alternativeName>
    <domain>
        <recommendedName>
            <fullName>3-beta-hydroxy-Delta(5)-steroid dehydrogenase</fullName>
            <ecNumber evidence="2">1.1.1.145</ecNumber>
        </recommendedName>
        <alternativeName>
            <fullName>3-beta-hydroxy-5-ene steroid dehydrogenase</fullName>
        </alternativeName>
        <alternativeName>
            <fullName>Progesterone reductase</fullName>
        </alternativeName>
    </domain>
    <domain>
        <recommendedName>
            <fullName>Steroid Delta-isomerase</fullName>
            <ecNumber evidence="2">5.3.3.1</ecNumber>
        </recommendedName>
        <alternativeName>
            <fullName>Delta-5-3-ketosteroid isomerase</fullName>
        </alternativeName>
    </domain>
</protein>
<organism>
    <name type="scientific">Mesocricetus auratus</name>
    <name type="common">Golden hamster</name>
    <dbReference type="NCBI Taxonomy" id="10036"/>
    <lineage>
        <taxon>Eukaryota</taxon>
        <taxon>Metazoa</taxon>
        <taxon>Chordata</taxon>
        <taxon>Craniata</taxon>
        <taxon>Vertebrata</taxon>
        <taxon>Euteleostomi</taxon>
        <taxon>Mammalia</taxon>
        <taxon>Eutheria</taxon>
        <taxon>Euarchontoglires</taxon>
        <taxon>Glires</taxon>
        <taxon>Rodentia</taxon>
        <taxon>Myomorpha</taxon>
        <taxon>Muroidea</taxon>
        <taxon>Cricetidae</taxon>
        <taxon>Cricetinae</taxon>
        <taxon>Mesocricetus</taxon>
    </lineage>
</organism>
<feature type="chain" id="PRO_0000087778" description="3 beta-hydroxysteroid dehydrogenase/Delta 5--&gt;4-isomerase type 2">
    <location>
        <begin position="1"/>
        <end position="373"/>
    </location>
</feature>
<feature type="transmembrane region" description="Helical" evidence="3">
    <location>
        <begin position="288"/>
        <end position="308"/>
    </location>
</feature>
<feature type="active site" description="Proton acceptor" evidence="1">
    <location>
        <position position="155"/>
    </location>
</feature>
<feature type="binding site" evidence="1">
    <location>
        <position position="159"/>
    </location>
    <ligand>
        <name>NAD(+)</name>
        <dbReference type="ChEBI" id="CHEBI:57540"/>
    </ligand>
</feature>
<reference key="1">
    <citation type="journal article" date="1995" name="J. Steroid Biochem. Mol. Biol.">
        <title>Expression and characterization of isoforms of 3 beta-hydroxysteroid dehydrogenase/delta 5--&gt;4-isomerase in the hamster.</title>
        <authorList>
            <person name="Rogerson F.M."/>
            <person name="Lehoux J.-G."/>
            <person name="Mason J.I."/>
        </authorList>
    </citation>
    <scope>NUCLEOTIDE SEQUENCE [MRNA]</scope>
    <source>
        <tissue>Kidney</tissue>
        <tissue>Liver</tissue>
    </source>
</reference>
<keyword id="KW-0256">Endoplasmic reticulum</keyword>
<keyword id="KW-0413">Isomerase</keyword>
<keyword id="KW-0443">Lipid metabolism</keyword>
<keyword id="KW-0472">Membrane</keyword>
<keyword id="KW-0496">Mitochondrion</keyword>
<keyword id="KW-0511">Multifunctional enzyme</keyword>
<keyword id="KW-0520">NAD</keyword>
<keyword id="KW-0560">Oxidoreductase</keyword>
<keyword id="KW-1185">Reference proteome</keyword>
<keyword id="KW-0755">Steroidogenesis</keyword>
<keyword id="KW-0812">Transmembrane</keyword>
<keyword id="KW-1133">Transmembrane helix</keyword>
<evidence type="ECO:0000250" key="1"/>
<evidence type="ECO:0000250" key="2">
    <source>
        <dbReference type="UniProtKB" id="P26439"/>
    </source>
</evidence>
<evidence type="ECO:0000255" key="3"/>
<evidence type="ECO:0000305" key="4"/>
<proteinExistence type="evidence at transcript level"/>
<accession>Q64421</accession>
<sequence length="373" mass="41903">MPGWSCLVTGAGGFLGQRIIHLLVQEKDLEEVRLLDKVFRPETREEFFKLQTKTKVTVLEGDILDAQCLRRACQGISVVIHTAAAIDVWGIIPRQTIIDINVKGTLNLLEACVQASVPAFIYTSSIDVAGPNSYKEIVLNGHEEQQHESTWSDPYPYSKMMAEKAVLAANGSFLKNGGTLHTCALRPMYIYGEKSSILSGIMIRAIKNNGILKVTGKFSTVNPVYVSNAAWAHILAARGLQDPKKSPNIQGQFYYISDDTPHQSYDDLNNTLSKKWGLRPDSSWRPPVALLYWLGFLLELVNFLLRPVYNYQPPFTRYLVTISNTVFTFSYKKAQRDLGYEPLVGWEEARENTSEWIGSLVEQHKGTLNTKAQ</sequence>